<gene>
    <name type="primary">NTMT1</name>
    <name type="synonym">METTL11A</name>
</gene>
<sequence length="223" mass="25289">MTSEVIEDEKQFYSKAKTYWKEVPATVDGMLGGYGHISSIDINSSRKFLQRFLREGQNKTGTSYALDCGAGIGRITKRLLLPLFGVVDMVDVTEDFLVKAKTYLGEEGKRVRNFFCCGLQDFSPEPQSYDVIWIQWVIGHLTDQHLAEFLRRCKRGLRPNGIIVIKDNMAQEGVILDDVDSSVCRALDVVHRIVRSAGLSLLAQERQENLPDEIYHVYSLALR</sequence>
<protein>
    <recommendedName>
        <fullName>N-terminal Xaa-Pro-Lys N-methyltransferase 1</fullName>
        <ecNumber evidence="1">2.1.1.244</ecNumber>
    </recommendedName>
    <alternativeName>
        <fullName>Alpha N-terminal protein methyltransferase 1A</fullName>
    </alternativeName>
    <alternativeName>
        <fullName>Methyltransferase-like protein 11A</fullName>
    </alternativeName>
    <alternativeName>
        <fullName>X-Pro-Lys N-terminal protein methyltransferase 1A</fullName>
        <shortName>NTM1A</shortName>
    </alternativeName>
    <component>
        <recommendedName>
            <fullName>N-terminal Xaa-Pro-Lys N-methyltransferase 1, N-terminally processed</fullName>
        </recommendedName>
    </component>
</protein>
<name>NTM1A_BOVIN</name>
<accession>Q2T9N3</accession>
<feature type="chain" id="PRO_0000423227" description="N-terminal Xaa-Pro-Lys N-methyltransferase 1">
    <location>
        <begin position="1"/>
        <end position="223"/>
    </location>
</feature>
<feature type="initiator methionine" description="Removed; alternate" evidence="1">
    <location>
        <position position="1"/>
    </location>
</feature>
<feature type="chain" id="PRO_0000245581" description="N-terminal Xaa-Pro-Lys N-methyltransferase 1, N-terminally processed">
    <location>
        <begin position="2"/>
        <end position="223"/>
    </location>
</feature>
<feature type="binding site" evidence="1">
    <location>
        <position position="69"/>
    </location>
    <ligand>
        <name>S-adenosyl-L-methionine</name>
        <dbReference type="ChEBI" id="CHEBI:59789"/>
    </ligand>
</feature>
<feature type="binding site" evidence="1">
    <location>
        <position position="74"/>
    </location>
    <ligand>
        <name>S-adenosyl-L-methionine</name>
        <dbReference type="ChEBI" id="CHEBI:59789"/>
    </ligand>
</feature>
<feature type="binding site" evidence="1">
    <location>
        <begin position="91"/>
        <end position="93"/>
    </location>
    <ligand>
        <name>S-adenosyl-L-methionine</name>
        <dbReference type="ChEBI" id="CHEBI:59789"/>
    </ligand>
</feature>
<feature type="binding site" evidence="1">
    <location>
        <begin position="119"/>
        <end position="120"/>
    </location>
    <ligand>
        <name>S-adenosyl-L-methionine</name>
        <dbReference type="ChEBI" id="CHEBI:59789"/>
    </ligand>
</feature>
<feature type="binding site" evidence="1">
    <location>
        <position position="135"/>
    </location>
    <ligand>
        <name>S-adenosyl-L-methionine</name>
        <dbReference type="ChEBI" id="CHEBI:59789"/>
    </ligand>
</feature>
<feature type="modified residue" description="N-acetylmethionine" evidence="1">
    <location>
        <position position="1"/>
    </location>
</feature>
<feature type="modified residue" description="N-acetylthreonine; in N-terminal Xaa-Pro-Lys N-methyltransferase 1, N-terminally processed" evidence="1">
    <location>
        <position position="2"/>
    </location>
</feature>
<reference key="1">
    <citation type="submission" date="2005-12" db="EMBL/GenBank/DDBJ databases">
        <authorList>
            <consortium name="NIH - Mammalian Gene Collection (MGC) project"/>
        </authorList>
    </citation>
    <scope>NUCLEOTIDE SEQUENCE [LARGE SCALE MRNA]</scope>
    <source>
        <strain>Crossbred X Angus</strain>
        <tissue>Liver</tissue>
    </source>
</reference>
<proteinExistence type="evidence at transcript level"/>
<evidence type="ECO:0000250" key="1">
    <source>
        <dbReference type="UniProtKB" id="Q9BV86"/>
    </source>
</evidence>
<evidence type="ECO:0000305" key="2"/>
<comment type="function">
    <text evidence="1">Distributive alpha-N-methyltransferase that methylates the N-terminus of target proteins containing the N-terminal motif [Ala/Gly/Pro/Ser]-Pro-Lys when the initiator Met is cleaved. Specifically catalyzes mono-, di- or tri-methylation of the exposed alpha-amino group of the Ala, Gly or Ser residue in the [Ala/Gly/Ser]-Pro-Lys motif and mono- or di-methylation of Pro in the Pro-Pro-Lys motif. Some of the substrates may be primed by NTMT2-mediated monomethylation. Catalyzes the trimethylation of the N-terminal Gly in CENPA (after removal of Met-1). Responsible for the N-terminal methylation of KLHL31, MYL2, MYL3, RB1, RCC1, RPL23A and SET. Required during mitosis for normal bipolar spindle formation and chromosome segregation via its action on RCC1.</text>
</comment>
<comment type="catalytic activity">
    <reaction evidence="1">
        <text>N-terminal L-alanyl-L-prolyl-L-lysyl-[protein] + 3 S-adenosyl-L-methionine = N-terminal N,N,N-trimethyl-L-alanyl-L-prolyl-L-lysyl-[protein] + 3 S-adenosyl-L-homocysteine + 3 H(+)</text>
        <dbReference type="Rhea" id="RHEA:54712"/>
        <dbReference type="Rhea" id="RHEA-COMP:13785"/>
        <dbReference type="Rhea" id="RHEA-COMP:13971"/>
        <dbReference type="ChEBI" id="CHEBI:15378"/>
        <dbReference type="ChEBI" id="CHEBI:57856"/>
        <dbReference type="ChEBI" id="CHEBI:59789"/>
        <dbReference type="ChEBI" id="CHEBI:138057"/>
        <dbReference type="ChEBI" id="CHEBI:138315"/>
        <dbReference type="EC" id="2.1.1.244"/>
    </reaction>
</comment>
<comment type="catalytic activity">
    <reaction evidence="1">
        <text>N-terminal L-seryl-L-prolyl-L-lysyl-[protein] + 3 S-adenosyl-L-methionine = N-terminal N,N,N-trimethyl-L-seryl-L-prolyl-L-lysyl-[protein] + 3 S-adenosyl-L-homocysteine + 3 H(+)</text>
        <dbReference type="Rhea" id="RHEA:54724"/>
        <dbReference type="Rhea" id="RHEA-COMP:13789"/>
        <dbReference type="Rhea" id="RHEA-COMP:13973"/>
        <dbReference type="ChEBI" id="CHEBI:15378"/>
        <dbReference type="ChEBI" id="CHEBI:57856"/>
        <dbReference type="ChEBI" id="CHEBI:59789"/>
        <dbReference type="ChEBI" id="CHEBI:138061"/>
        <dbReference type="ChEBI" id="CHEBI:138317"/>
        <dbReference type="EC" id="2.1.1.244"/>
    </reaction>
</comment>
<comment type="catalytic activity">
    <reaction evidence="1">
        <text>N-terminal L-prolyl-L-prolyl-L-lysyl-[protein] + 2 S-adenosyl-L-methionine = N-terminal N,N-dimethyl-L-prolyl-L-prolyl-L-lysyl-[protein] + 2 S-adenosyl-L-homocysteine + 2 H(+)</text>
        <dbReference type="Rhea" id="RHEA:54736"/>
        <dbReference type="Rhea" id="RHEA-COMP:13787"/>
        <dbReference type="Rhea" id="RHEA-COMP:13974"/>
        <dbReference type="ChEBI" id="CHEBI:15378"/>
        <dbReference type="ChEBI" id="CHEBI:57856"/>
        <dbReference type="ChEBI" id="CHEBI:59789"/>
        <dbReference type="ChEBI" id="CHEBI:138059"/>
        <dbReference type="ChEBI" id="CHEBI:138318"/>
        <dbReference type="EC" id="2.1.1.244"/>
    </reaction>
</comment>
<comment type="subcellular location">
    <subcellularLocation>
        <location evidence="1">Nucleus</location>
    </subcellularLocation>
    <text evidence="1">Predominantly nuclear.</text>
</comment>
<comment type="similarity">
    <text evidence="2">Belongs to the methyltransferase superfamily. NTM1 family.</text>
</comment>
<organism>
    <name type="scientific">Bos taurus</name>
    <name type="common">Bovine</name>
    <dbReference type="NCBI Taxonomy" id="9913"/>
    <lineage>
        <taxon>Eukaryota</taxon>
        <taxon>Metazoa</taxon>
        <taxon>Chordata</taxon>
        <taxon>Craniata</taxon>
        <taxon>Vertebrata</taxon>
        <taxon>Euteleostomi</taxon>
        <taxon>Mammalia</taxon>
        <taxon>Eutheria</taxon>
        <taxon>Laurasiatheria</taxon>
        <taxon>Artiodactyla</taxon>
        <taxon>Ruminantia</taxon>
        <taxon>Pecora</taxon>
        <taxon>Bovidae</taxon>
        <taxon>Bovinae</taxon>
        <taxon>Bos</taxon>
    </lineage>
</organism>
<dbReference type="EC" id="2.1.1.244" evidence="1"/>
<dbReference type="EMBL" id="BC111344">
    <property type="protein sequence ID" value="AAI11345.1"/>
    <property type="molecule type" value="mRNA"/>
</dbReference>
<dbReference type="RefSeq" id="NP_001033306.1">
    <property type="nucleotide sequence ID" value="NM_001038217.2"/>
</dbReference>
<dbReference type="SMR" id="Q2T9N3"/>
<dbReference type="FunCoup" id="Q2T9N3">
    <property type="interactions" value="2313"/>
</dbReference>
<dbReference type="STRING" id="9913.ENSBTAP00000061187"/>
<dbReference type="PaxDb" id="9913-ENSBTAP00000020514"/>
<dbReference type="GeneID" id="617042"/>
<dbReference type="KEGG" id="bta:617042"/>
<dbReference type="CTD" id="28989"/>
<dbReference type="eggNOG" id="KOG3178">
    <property type="taxonomic scope" value="Eukaryota"/>
</dbReference>
<dbReference type="InParanoid" id="Q2T9N3"/>
<dbReference type="OrthoDB" id="1298661at2759"/>
<dbReference type="Proteomes" id="UP000009136">
    <property type="component" value="Unplaced"/>
</dbReference>
<dbReference type="GO" id="GO:0005737">
    <property type="term" value="C:cytoplasm"/>
    <property type="evidence" value="ECO:0000318"/>
    <property type="project" value="GO_Central"/>
</dbReference>
<dbReference type="GO" id="GO:0005634">
    <property type="term" value="C:nucleus"/>
    <property type="evidence" value="ECO:0000250"/>
    <property type="project" value="UniProtKB"/>
</dbReference>
<dbReference type="GO" id="GO:0042054">
    <property type="term" value="F:histone methyltransferase activity"/>
    <property type="evidence" value="ECO:0000250"/>
    <property type="project" value="UniProtKB"/>
</dbReference>
<dbReference type="GO" id="GO:0071885">
    <property type="term" value="F:N-terminal protein N-methyltransferase activity"/>
    <property type="evidence" value="ECO:0000250"/>
    <property type="project" value="UniProtKB"/>
</dbReference>
<dbReference type="GO" id="GO:0008276">
    <property type="term" value="F:protein methyltransferase activity"/>
    <property type="evidence" value="ECO:0000250"/>
    <property type="project" value="UniProtKB"/>
</dbReference>
<dbReference type="GO" id="GO:0007059">
    <property type="term" value="P:chromosome segregation"/>
    <property type="evidence" value="ECO:0000250"/>
    <property type="project" value="UniProtKB"/>
</dbReference>
<dbReference type="GO" id="GO:0018013">
    <property type="term" value="P:N-terminal peptidyl-glycine methylation"/>
    <property type="evidence" value="ECO:0000250"/>
    <property type="project" value="UniProtKB"/>
</dbReference>
<dbReference type="GO" id="GO:0018016">
    <property type="term" value="P:N-terminal peptidyl-proline dimethylation"/>
    <property type="evidence" value="ECO:0000250"/>
    <property type="project" value="UniProtKB"/>
</dbReference>
<dbReference type="GO" id="GO:0035572">
    <property type="term" value="P:N-terminal peptidyl-serine dimethylation"/>
    <property type="evidence" value="ECO:0000250"/>
    <property type="project" value="UniProtKB"/>
</dbReference>
<dbReference type="GO" id="GO:0035573">
    <property type="term" value="P:N-terminal peptidyl-serine trimethylation"/>
    <property type="evidence" value="ECO:0000250"/>
    <property type="project" value="UniProtKB"/>
</dbReference>
<dbReference type="GO" id="GO:0007051">
    <property type="term" value="P:spindle organization"/>
    <property type="evidence" value="ECO:0000250"/>
    <property type="project" value="UniProtKB"/>
</dbReference>
<dbReference type="CDD" id="cd02440">
    <property type="entry name" value="AdoMet_MTases"/>
    <property type="match status" value="1"/>
</dbReference>
<dbReference type="FunFam" id="3.40.50.150:FF:000025">
    <property type="entry name" value="N-terminal Xaa-Pro-Lys N-methyltransferase 1"/>
    <property type="match status" value="1"/>
</dbReference>
<dbReference type="Gene3D" id="3.40.50.150">
    <property type="entry name" value="Vaccinia Virus protein VP39"/>
    <property type="match status" value="1"/>
</dbReference>
<dbReference type="InterPro" id="IPR008576">
    <property type="entry name" value="MeTrfase_NTM1"/>
</dbReference>
<dbReference type="InterPro" id="IPR029063">
    <property type="entry name" value="SAM-dependent_MTases_sf"/>
</dbReference>
<dbReference type="PANTHER" id="PTHR12753">
    <property type="entry name" value="AD-003 - RELATED"/>
    <property type="match status" value="1"/>
</dbReference>
<dbReference type="PANTHER" id="PTHR12753:SF1">
    <property type="entry name" value="N-TERMINAL XAA-PRO-LYS N-METHYLTRANSFERASE 1"/>
    <property type="match status" value="1"/>
</dbReference>
<dbReference type="Pfam" id="PF05891">
    <property type="entry name" value="Methyltransf_PK"/>
    <property type="match status" value="1"/>
</dbReference>
<dbReference type="PIRSF" id="PIRSF016958">
    <property type="entry name" value="DUF858_MeTrfase_lik"/>
    <property type="match status" value="1"/>
</dbReference>
<dbReference type="SUPFAM" id="SSF53335">
    <property type="entry name" value="S-adenosyl-L-methionine-dependent methyltransferases"/>
    <property type="match status" value="1"/>
</dbReference>
<keyword id="KW-0007">Acetylation</keyword>
<keyword id="KW-0489">Methyltransferase</keyword>
<keyword id="KW-0539">Nucleus</keyword>
<keyword id="KW-1185">Reference proteome</keyword>
<keyword id="KW-0949">S-adenosyl-L-methionine</keyword>
<keyword id="KW-0808">Transferase</keyword>